<gene>
    <name evidence="1" type="primary">hemL</name>
    <name type="ordered locus">BPP3936</name>
</gene>
<reference key="1">
    <citation type="journal article" date="2003" name="Nat. Genet.">
        <title>Comparative analysis of the genome sequences of Bordetella pertussis, Bordetella parapertussis and Bordetella bronchiseptica.</title>
        <authorList>
            <person name="Parkhill J."/>
            <person name="Sebaihia M."/>
            <person name="Preston A."/>
            <person name="Murphy L.D."/>
            <person name="Thomson N.R."/>
            <person name="Harris D.E."/>
            <person name="Holden M.T.G."/>
            <person name="Churcher C.M."/>
            <person name="Bentley S.D."/>
            <person name="Mungall K.L."/>
            <person name="Cerdeno-Tarraga A.-M."/>
            <person name="Temple L."/>
            <person name="James K.D."/>
            <person name="Harris B."/>
            <person name="Quail M.A."/>
            <person name="Achtman M."/>
            <person name="Atkin R."/>
            <person name="Baker S."/>
            <person name="Basham D."/>
            <person name="Bason N."/>
            <person name="Cherevach I."/>
            <person name="Chillingworth T."/>
            <person name="Collins M."/>
            <person name="Cronin A."/>
            <person name="Davis P."/>
            <person name="Doggett J."/>
            <person name="Feltwell T."/>
            <person name="Goble A."/>
            <person name="Hamlin N."/>
            <person name="Hauser H."/>
            <person name="Holroyd S."/>
            <person name="Jagels K."/>
            <person name="Leather S."/>
            <person name="Moule S."/>
            <person name="Norberczak H."/>
            <person name="O'Neil S."/>
            <person name="Ormond D."/>
            <person name="Price C."/>
            <person name="Rabbinowitsch E."/>
            <person name="Rutter S."/>
            <person name="Sanders M."/>
            <person name="Saunders D."/>
            <person name="Seeger K."/>
            <person name="Sharp S."/>
            <person name="Simmonds M."/>
            <person name="Skelton J."/>
            <person name="Squares R."/>
            <person name="Squares S."/>
            <person name="Stevens K."/>
            <person name="Unwin L."/>
            <person name="Whitehead S."/>
            <person name="Barrell B.G."/>
            <person name="Maskell D.J."/>
        </authorList>
    </citation>
    <scope>NUCLEOTIDE SEQUENCE [LARGE SCALE GENOMIC DNA]</scope>
    <source>
        <strain>12822 / ATCC BAA-587 / NCTC 13253</strain>
    </source>
</reference>
<feature type="chain" id="PRO_0000243552" description="Glutamate-1-semialdehyde 2,1-aminomutase">
    <location>
        <begin position="1"/>
        <end position="427"/>
    </location>
</feature>
<feature type="modified residue" description="N6-(pyridoxal phosphate)lysine" evidence="1">
    <location>
        <position position="265"/>
    </location>
</feature>
<sequence>MSTNAELFDRACRSIPGGVNSPVRAFRSVGGTPRFIQRAQGPYVWDAEGKQYIDYVGSWGPAILGHAHPEVVRAVQEAAVHGLSFGAPTEAEVELAEMLIARLPSLEQVRLVSSGTEATMTAIRLARGATGRHKIIKFEGCYHGHSDSLLVKAGSGLLTFGNPSSAGVPPEFVAHTLPLEFNNLAAVDAAFSQHGAEIACVIVEPVAGNMNLIKPAEGFLAGLRELCTRHGAVLIFDEVMTGFRVGPQGVQGLTGVRPDLTTLAKVIGGGMPVGAFGGRADLMAHITPLGGVYQAGTLSGNPVAVAAGLATMRLIGEPGFYERLSAQTARLAQGLQERARAAGVPFSADAIGGMFGLYFGDRVPASFAEVSACDTEAFKRFFHAMLERGIHFAPSAFEAGFVSATHDDAVIDATLEAAEQVFATLRA</sequence>
<proteinExistence type="inferred from homology"/>
<evidence type="ECO:0000255" key="1">
    <source>
        <dbReference type="HAMAP-Rule" id="MF_00375"/>
    </source>
</evidence>
<accession>Q7W3U1</accession>
<dbReference type="EC" id="5.4.3.8" evidence="1"/>
<dbReference type="EMBL" id="BX640435">
    <property type="protein sequence ID" value="CAE39219.1"/>
    <property type="molecule type" value="Genomic_DNA"/>
</dbReference>
<dbReference type="RefSeq" id="WP_010929314.1">
    <property type="nucleotide sequence ID" value="NC_002928.3"/>
</dbReference>
<dbReference type="SMR" id="Q7W3U1"/>
<dbReference type="GeneID" id="93205735"/>
<dbReference type="KEGG" id="bpa:BPP3936"/>
<dbReference type="HOGENOM" id="CLU_016922_1_5_4"/>
<dbReference type="UniPathway" id="UPA00251">
    <property type="reaction ID" value="UER00317"/>
</dbReference>
<dbReference type="Proteomes" id="UP000001421">
    <property type="component" value="Chromosome"/>
</dbReference>
<dbReference type="GO" id="GO:0005737">
    <property type="term" value="C:cytoplasm"/>
    <property type="evidence" value="ECO:0007669"/>
    <property type="project" value="UniProtKB-SubCell"/>
</dbReference>
<dbReference type="GO" id="GO:0042286">
    <property type="term" value="F:glutamate-1-semialdehyde 2,1-aminomutase activity"/>
    <property type="evidence" value="ECO:0007669"/>
    <property type="project" value="UniProtKB-UniRule"/>
</dbReference>
<dbReference type="GO" id="GO:0030170">
    <property type="term" value="F:pyridoxal phosphate binding"/>
    <property type="evidence" value="ECO:0007669"/>
    <property type="project" value="InterPro"/>
</dbReference>
<dbReference type="GO" id="GO:0008483">
    <property type="term" value="F:transaminase activity"/>
    <property type="evidence" value="ECO:0007669"/>
    <property type="project" value="InterPro"/>
</dbReference>
<dbReference type="GO" id="GO:0006782">
    <property type="term" value="P:protoporphyrinogen IX biosynthetic process"/>
    <property type="evidence" value="ECO:0007669"/>
    <property type="project" value="UniProtKB-UniRule"/>
</dbReference>
<dbReference type="CDD" id="cd00610">
    <property type="entry name" value="OAT_like"/>
    <property type="match status" value="1"/>
</dbReference>
<dbReference type="FunFam" id="3.40.640.10:FF:000021">
    <property type="entry name" value="Glutamate-1-semialdehyde 2,1-aminomutase"/>
    <property type="match status" value="1"/>
</dbReference>
<dbReference type="Gene3D" id="3.90.1150.10">
    <property type="entry name" value="Aspartate Aminotransferase, domain 1"/>
    <property type="match status" value="1"/>
</dbReference>
<dbReference type="Gene3D" id="3.40.640.10">
    <property type="entry name" value="Type I PLP-dependent aspartate aminotransferase-like (Major domain)"/>
    <property type="match status" value="1"/>
</dbReference>
<dbReference type="HAMAP" id="MF_00375">
    <property type="entry name" value="HemL_aminotrans_3"/>
    <property type="match status" value="1"/>
</dbReference>
<dbReference type="InterPro" id="IPR004639">
    <property type="entry name" value="4pyrrol_synth_GluAld_NH2Trfase"/>
</dbReference>
<dbReference type="InterPro" id="IPR005814">
    <property type="entry name" value="Aminotrans_3"/>
</dbReference>
<dbReference type="InterPro" id="IPR049704">
    <property type="entry name" value="Aminotrans_3_PPA_site"/>
</dbReference>
<dbReference type="InterPro" id="IPR015424">
    <property type="entry name" value="PyrdxlP-dep_Trfase"/>
</dbReference>
<dbReference type="InterPro" id="IPR015421">
    <property type="entry name" value="PyrdxlP-dep_Trfase_major"/>
</dbReference>
<dbReference type="InterPro" id="IPR015422">
    <property type="entry name" value="PyrdxlP-dep_Trfase_small"/>
</dbReference>
<dbReference type="NCBIfam" id="TIGR00713">
    <property type="entry name" value="hemL"/>
    <property type="match status" value="1"/>
</dbReference>
<dbReference type="NCBIfam" id="NF000818">
    <property type="entry name" value="PRK00062.1"/>
    <property type="match status" value="1"/>
</dbReference>
<dbReference type="PANTHER" id="PTHR43713">
    <property type="entry name" value="GLUTAMATE-1-SEMIALDEHYDE 2,1-AMINOMUTASE"/>
    <property type="match status" value="1"/>
</dbReference>
<dbReference type="PANTHER" id="PTHR43713:SF3">
    <property type="entry name" value="GLUTAMATE-1-SEMIALDEHYDE 2,1-AMINOMUTASE 1, CHLOROPLASTIC-RELATED"/>
    <property type="match status" value="1"/>
</dbReference>
<dbReference type="Pfam" id="PF00202">
    <property type="entry name" value="Aminotran_3"/>
    <property type="match status" value="1"/>
</dbReference>
<dbReference type="SUPFAM" id="SSF53383">
    <property type="entry name" value="PLP-dependent transferases"/>
    <property type="match status" value="1"/>
</dbReference>
<dbReference type="PROSITE" id="PS00600">
    <property type="entry name" value="AA_TRANSFER_CLASS_3"/>
    <property type="match status" value="1"/>
</dbReference>
<organism>
    <name type="scientific">Bordetella parapertussis (strain 12822 / ATCC BAA-587 / NCTC 13253)</name>
    <dbReference type="NCBI Taxonomy" id="257311"/>
    <lineage>
        <taxon>Bacteria</taxon>
        <taxon>Pseudomonadati</taxon>
        <taxon>Pseudomonadota</taxon>
        <taxon>Betaproteobacteria</taxon>
        <taxon>Burkholderiales</taxon>
        <taxon>Alcaligenaceae</taxon>
        <taxon>Bordetella</taxon>
    </lineage>
</organism>
<keyword id="KW-0963">Cytoplasm</keyword>
<keyword id="KW-0413">Isomerase</keyword>
<keyword id="KW-0627">Porphyrin biosynthesis</keyword>
<keyword id="KW-0663">Pyridoxal phosphate</keyword>
<name>GSA_BORPA</name>
<protein>
    <recommendedName>
        <fullName evidence="1">Glutamate-1-semialdehyde 2,1-aminomutase</fullName>
        <shortName evidence="1">GSA</shortName>
        <ecNumber evidence="1">5.4.3.8</ecNumber>
    </recommendedName>
    <alternativeName>
        <fullName evidence="1">Glutamate-1-semialdehyde aminotransferase</fullName>
        <shortName evidence="1">GSA-AT</shortName>
    </alternativeName>
</protein>
<comment type="catalytic activity">
    <reaction evidence="1">
        <text>(S)-4-amino-5-oxopentanoate = 5-aminolevulinate</text>
        <dbReference type="Rhea" id="RHEA:14265"/>
        <dbReference type="ChEBI" id="CHEBI:57501"/>
        <dbReference type="ChEBI" id="CHEBI:356416"/>
        <dbReference type="EC" id="5.4.3.8"/>
    </reaction>
</comment>
<comment type="cofactor">
    <cofactor evidence="1">
        <name>pyridoxal 5'-phosphate</name>
        <dbReference type="ChEBI" id="CHEBI:597326"/>
    </cofactor>
</comment>
<comment type="pathway">
    <text evidence="1">Porphyrin-containing compound metabolism; protoporphyrin-IX biosynthesis; 5-aminolevulinate from L-glutamyl-tRNA(Glu): step 2/2.</text>
</comment>
<comment type="subunit">
    <text evidence="1">Homodimer.</text>
</comment>
<comment type="subcellular location">
    <subcellularLocation>
        <location evidence="1">Cytoplasm</location>
    </subcellularLocation>
</comment>
<comment type="similarity">
    <text evidence="1">Belongs to the class-III pyridoxal-phosphate-dependent aminotransferase family. HemL subfamily.</text>
</comment>